<keyword id="KW-0067">ATP-binding</keyword>
<keyword id="KW-0131">Cell cycle</keyword>
<keyword id="KW-0132">Cell division</keyword>
<keyword id="KW-0133">Cell shape</keyword>
<keyword id="KW-0961">Cell wall biogenesis/degradation</keyword>
<keyword id="KW-0963">Cytoplasm</keyword>
<keyword id="KW-0436">Ligase</keyword>
<keyword id="KW-0547">Nucleotide-binding</keyword>
<keyword id="KW-0573">Peptidoglycan synthesis</keyword>
<keyword id="KW-1185">Reference proteome</keyword>
<sequence>MDNATVYHFVGIKGSGMSALALILHDKGFKVQGSDITQYTFTQRGLEQAGIDVMAFDEANIHEGLTVIAGNSFTDDHPEIKKAREMGLPVYRYHEFLGHLIEGYTSIGVAGAHGKTSTTGLLAHVLSGVAPTSYLIGDGSGKGTPNARFFVYEADEYRRHFLATKPDYAIMTNIDFDHPDYYTGIDDVYSAFETLAKQVKKGIFAWGDDPELRKLKTDVPVYYYGTSDRDDFQARNIKRSTTGSTFDVYHDDEFLGNFEIHLFGEHNVLNSLAVIAVAYFEKVNMDEIKHELADFKGVKRRFTERKLADMTIIDDYAHHPSEIKATLDAARQKYPDKEIIAVFQPHTFSRTIALMDDFAKSLNLADKVFLTNIFSSARETQGAVSSKDLAQKIVKGGEILTVDNMSPLLDFHDAVVVFMGAGDVQKYERAYEELLSHLSLKNN</sequence>
<gene>
    <name evidence="1" type="primary">murC</name>
    <name type="ordered locus">LVIS_1047</name>
</gene>
<feature type="chain" id="PRO_1000004355" description="UDP-N-acetylmuramate--L-alanine ligase">
    <location>
        <begin position="1"/>
        <end position="443"/>
    </location>
</feature>
<feature type="binding site" evidence="1">
    <location>
        <begin position="111"/>
        <end position="117"/>
    </location>
    <ligand>
        <name>ATP</name>
        <dbReference type="ChEBI" id="CHEBI:30616"/>
    </ligand>
</feature>
<proteinExistence type="inferred from homology"/>
<protein>
    <recommendedName>
        <fullName evidence="1">UDP-N-acetylmuramate--L-alanine ligase</fullName>
        <ecNumber evidence="1">6.3.2.8</ecNumber>
    </recommendedName>
    <alternativeName>
        <fullName evidence="1">UDP-N-acetylmuramoyl-L-alanine synthetase</fullName>
    </alternativeName>
</protein>
<dbReference type="EC" id="6.3.2.8" evidence="1"/>
<dbReference type="EMBL" id="CP000416">
    <property type="protein sequence ID" value="ABJ64180.1"/>
    <property type="molecule type" value="Genomic_DNA"/>
</dbReference>
<dbReference type="RefSeq" id="WP_011667810.1">
    <property type="nucleotide sequence ID" value="NC_008497.1"/>
</dbReference>
<dbReference type="SMR" id="Q03RJ2"/>
<dbReference type="STRING" id="387344.LVIS_1047"/>
<dbReference type="GeneID" id="56992732"/>
<dbReference type="KEGG" id="lbr:LVIS_1047"/>
<dbReference type="eggNOG" id="COG0773">
    <property type="taxonomic scope" value="Bacteria"/>
</dbReference>
<dbReference type="HOGENOM" id="CLU_028104_1_0_9"/>
<dbReference type="UniPathway" id="UPA00219"/>
<dbReference type="Proteomes" id="UP000001652">
    <property type="component" value="Chromosome"/>
</dbReference>
<dbReference type="GO" id="GO:0005737">
    <property type="term" value="C:cytoplasm"/>
    <property type="evidence" value="ECO:0007669"/>
    <property type="project" value="UniProtKB-SubCell"/>
</dbReference>
<dbReference type="GO" id="GO:0005524">
    <property type="term" value="F:ATP binding"/>
    <property type="evidence" value="ECO:0007669"/>
    <property type="project" value="UniProtKB-UniRule"/>
</dbReference>
<dbReference type="GO" id="GO:0008763">
    <property type="term" value="F:UDP-N-acetylmuramate-L-alanine ligase activity"/>
    <property type="evidence" value="ECO:0007669"/>
    <property type="project" value="UniProtKB-UniRule"/>
</dbReference>
<dbReference type="GO" id="GO:0051301">
    <property type="term" value="P:cell division"/>
    <property type="evidence" value="ECO:0007669"/>
    <property type="project" value="UniProtKB-KW"/>
</dbReference>
<dbReference type="GO" id="GO:0071555">
    <property type="term" value="P:cell wall organization"/>
    <property type="evidence" value="ECO:0007669"/>
    <property type="project" value="UniProtKB-KW"/>
</dbReference>
<dbReference type="GO" id="GO:0009252">
    <property type="term" value="P:peptidoglycan biosynthetic process"/>
    <property type="evidence" value="ECO:0007669"/>
    <property type="project" value="UniProtKB-UniRule"/>
</dbReference>
<dbReference type="GO" id="GO:0008360">
    <property type="term" value="P:regulation of cell shape"/>
    <property type="evidence" value="ECO:0007669"/>
    <property type="project" value="UniProtKB-KW"/>
</dbReference>
<dbReference type="Gene3D" id="3.90.190.20">
    <property type="entry name" value="Mur ligase, C-terminal domain"/>
    <property type="match status" value="1"/>
</dbReference>
<dbReference type="Gene3D" id="3.40.1190.10">
    <property type="entry name" value="Mur-like, catalytic domain"/>
    <property type="match status" value="1"/>
</dbReference>
<dbReference type="Gene3D" id="3.40.50.720">
    <property type="entry name" value="NAD(P)-binding Rossmann-like Domain"/>
    <property type="match status" value="1"/>
</dbReference>
<dbReference type="HAMAP" id="MF_00046">
    <property type="entry name" value="MurC"/>
    <property type="match status" value="1"/>
</dbReference>
<dbReference type="InterPro" id="IPR036565">
    <property type="entry name" value="Mur-like_cat_sf"/>
</dbReference>
<dbReference type="InterPro" id="IPR004101">
    <property type="entry name" value="Mur_ligase_C"/>
</dbReference>
<dbReference type="InterPro" id="IPR036615">
    <property type="entry name" value="Mur_ligase_C_dom_sf"/>
</dbReference>
<dbReference type="InterPro" id="IPR013221">
    <property type="entry name" value="Mur_ligase_cen"/>
</dbReference>
<dbReference type="InterPro" id="IPR000713">
    <property type="entry name" value="Mur_ligase_N"/>
</dbReference>
<dbReference type="InterPro" id="IPR050061">
    <property type="entry name" value="MurCDEF_pg_biosynth"/>
</dbReference>
<dbReference type="InterPro" id="IPR005758">
    <property type="entry name" value="UDP-N-AcMur_Ala_ligase_MurC"/>
</dbReference>
<dbReference type="NCBIfam" id="TIGR01082">
    <property type="entry name" value="murC"/>
    <property type="match status" value="1"/>
</dbReference>
<dbReference type="PANTHER" id="PTHR43445:SF3">
    <property type="entry name" value="UDP-N-ACETYLMURAMATE--L-ALANINE LIGASE"/>
    <property type="match status" value="1"/>
</dbReference>
<dbReference type="PANTHER" id="PTHR43445">
    <property type="entry name" value="UDP-N-ACETYLMURAMATE--L-ALANINE LIGASE-RELATED"/>
    <property type="match status" value="1"/>
</dbReference>
<dbReference type="Pfam" id="PF01225">
    <property type="entry name" value="Mur_ligase"/>
    <property type="match status" value="1"/>
</dbReference>
<dbReference type="Pfam" id="PF02875">
    <property type="entry name" value="Mur_ligase_C"/>
    <property type="match status" value="1"/>
</dbReference>
<dbReference type="Pfam" id="PF08245">
    <property type="entry name" value="Mur_ligase_M"/>
    <property type="match status" value="1"/>
</dbReference>
<dbReference type="SUPFAM" id="SSF51984">
    <property type="entry name" value="MurCD N-terminal domain"/>
    <property type="match status" value="1"/>
</dbReference>
<dbReference type="SUPFAM" id="SSF53623">
    <property type="entry name" value="MurD-like peptide ligases, catalytic domain"/>
    <property type="match status" value="1"/>
</dbReference>
<dbReference type="SUPFAM" id="SSF53244">
    <property type="entry name" value="MurD-like peptide ligases, peptide-binding domain"/>
    <property type="match status" value="1"/>
</dbReference>
<evidence type="ECO:0000255" key="1">
    <source>
        <dbReference type="HAMAP-Rule" id="MF_00046"/>
    </source>
</evidence>
<accession>Q03RJ2</accession>
<reference key="1">
    <citation type="journal article" date="2006" name="Proc. Natl. Acad. Sci. U.S.A.">
        <title>Comparative genomics of the lactic acid bacteria.</title>
        <authorList>
            <person name="Makarova K.S."/>
            <person name="Slesarev A."/>
            <person name="Wolf Y.I."/>
            <person name="Sorokin A."/>
            <person name="Mirkin B."/>
            <person name="Koonin E.V."/>
            <person name="Pavlov A."/>
            <person name="Pavlova N."/>
            <person name="Karamychev V."/>
            <person name="Polouchine N."/>
            <person name="Shakhova V."/>
            <person name="Grigoriev I."/>
            <person name="Lou Y."/>
            <person name="Rohksar D."/>
            <person name="Lucas S."/>
            <person name="Huang K."/>
            <person name="Goodstein D.M."/>
            <person name="Hawkins T."/>
            <person name="Plengvidhya V."/>
            <person name="Welker D."/>
            <person name="Hughes J."/>
            <person name="Goh Y."/>
            <person name="Benson A."/>
            <person name="Baldwin K."/>
            <person name="Lee J.-H."/>
            <person name="Diaz-Muniz I."/>
            <person name="Dosti B."/>
            <person name="Smeianov V."/>
            <person name="Wechter W."/>
            <person name="Barabote R."/>
            <person name="Lorca G."/>
            <person name="Altermann E."/>
            <person name="Barrangou R."/>
            <person name="Ganesan B."/>
            <person name="Xie Y."/>
            <person name="Rawsthorne H."/>
            <person name="Tamir D."/>
            <person name="Parker C."/>
            <person name="Breidt F."/>
            <person name="Broadbent J.R."/>
            <person name="Hutkins R."/>
            <person name="O'Sullivan D."/>
            <person name="Steele J."/>
            <person name="Unlu G."/>
            <person name="Saier M.H. Jr."/>
            <person name="Klaenhammer T."/>
            <person name="Richardson P."/>
            <person name="Kozyavkin S."/>
            <person name="Weimer B.C."/>
            <person name="Mills D.A."/>
        </authorList>
    </citation>
    <scope>NUCLEOTIDE SEQUENCE [LARGE SCALE GENOMIC DNA]</scope>
    <source>
        <strain>ATCC 367 / BCRC 12310 / CIP 105137 / JCM 1170 / LMG 11437 / NCIMB 947 / NCTC 947</strain>
    </source>
</reference>
<name>MURC_LEVBA</name>
<comment type="function">
    <text evidence="1">Cell wall formation.</text>
</comment>
<comment type="catalytic activity">
    <reaction evidence="1">
        <text>UDP-N-acetyl-alpha-D-muramate + L-alanine + ATP = UDP-N-acetyl-alpha-D-muramoyl-L-alanine + ADP + phosphate + H(+)</text>
        <dbReference type="Rhea" id="RHEA:23372"/>
        <dbReference type="ChEBI" id="CHEBI:15378"/>
        <dbReference type="ChEBI" id="CHEBI:30616"/>
        <dbReference type="ChEBI" id="CHEBI:43474"/>
        <dbReference type="ChEBI" id="CHEBI:57972"/>
        <dbReference type="ChEBI" id="CHEBI:70757"/>
        <dbReference type="ChEBI" id="CHEBI:83898"/>
        <dbReference type="ChEBI" id="CHEBI:456216"/>
        <dbReference type="EC" id="6.3.2.8"/>
    </reaction>
</comment>
<comment type="pathway">
    <text evidence="1">Cell wall biogenesis; peptidoglycan biosynthesis.</text>
</comment>
<comment type="subcellular location">
    <subcellularLocation>
        <location evidence="1">Cytoplasm</location>
    </subcellularLocation>
</comment>
<comment type="similarity">
    <text evidence="1">Belongs to the MurCDEF family.</text>
</comment>
<organism>
    <name type="scientific">Levilactobacillus brevis (strain ATCC 367 / BCRC 12310 / CIP 105137 / JCM 1170 / LMG 11437 / NCIMB 947 / NCTC 947)</name>
    <name type="common">Lactobacillus brevis</name>
    <dbReference type="NCBI Taxonomy" id="387344"/>
    <lineage>
        <taxon>Bacteria</taxon>
        <taxon>Bacillati</taxon>
        <taxon>Bacillota</taxon>
        <taxon>Bacilli</taxon>
        <taxon>Lactobacillales</taxon>
        <taxon>Lactobacillaceae</taxon>
        <taxon>Levilactobacillus</taxon>
    </lineage>
</organism>